<organism>
    <name type="scientific">Chromohalobacter salexigens (strain ATCC BAA-138 / DSM 3043 / CIP 106854 / NCIMB 13768 / 1H11)</name>
    <dbReference type="NCBI Taxonomy" id="290398"/>
    <lineage>
        <taxon>Bacteria</taxon>
        <taxon>Pseudomonadati</taxon>
        <taxon>Pseudomonadota</taxon>
        <taxon>Gammaproteobacteria</taxon>
        <taxon>Oceanospirillales</taxon>
        <taxon>Halomonadaceae</taxon>
        <taxon>Chromohalobacter</taxon>
    </lineage>
</organism>
<sequence>MILDLDIGNTLSKWRLKDVASSEIRSRGAVWTREEWRPGADIPDLDVVEAVRISSVARASVLRDTVALLRRQVGAVHVARSTPEALGVSCGYEEPARLGVDRWMGVLAGYQLTGGCCSVDCGSAITMDFVLPGGRHLGGYIIPGLRLMKESLKLGTRNVAIDPDSEADELLAPGRNTVEAVNHGIYMSAVSAVNRIYSEVCDREGVALPLLLTGGDARVVSRGLRVPHAIWPDMVYAGLETCFPMTAAERAGRLSGAPPPPPAPPLEKVRASLAFSMLL</sequence>
<proteinExistence type="inferred from homology"/>
<dbReference type="EC" id="2.7.1.33" evidence="1"/>
<dbReference type="EMBL" id="CP000285">
    <property type="protein sequence ID" value="ABE57769.1"/>
    <property type="molecule type" value="Genomic_DNA"/>
</dbReference>
<dbReference type="RefSeq" id="WP_011505715.1">
    <property type="nucleotide sequence ID" value="NC_007963.1"/>
</dbReference>
<dbReference type="SMR" id="Q1R0I9"/>
<dbReference type="STRING" id="290398.Csal_0407"/>
<dbReference type="GeneID" id="95333156"/>
<dbReference type="KEGG" id="csa:Csal_0407"/>
<dbReference type="eggNOG" id="COG1521">
    <property type="taxonomic scope" value="Bacteria"/>
</dbReference>
<dbReference type="HOGENOM" id="CLU_066627_0_1_6"/>
<dbReference type="OrthoDB" id="9781305at2"/>
<dbReference type="UniPathway" id="UPA00241">
    <property type="reaction ID" value="UER00352"/>
</dbReference>
<dbReference type="Proteomes" id="UP000000239">
    <property type="component" value="Chromosome"/>
</dbReference>
<dbReference type="GO" id="GO:0005737">
    <property type="term" value="C:cytoplasm"/>
    <property type="evidence" value="ECO:0007669"/>
    <property type="project" value="UniProtKB-SubCell"/>
</dbReference>
<dbReference type="GO" id="GO:0005524">
    <property type="term" value="F:ATP binding"/>
    <property type="evidence" value="ECO:0007669"/>
    <property type="project" value="UniProtKB-UniRule"/>
</dbReference>
<dbReference type="GO" id="GO:0046872">
    <property type="term" value="F:metal ion binding"/>
    <property type="evidence" value="ECO:0007669"/>
    <property type="project" value="UniProtKB-KW"/>
</dbReference>
<dbReference type="GO" id="GO:0004594">
    <property type="term" value="F:pantothenate kinase activity"/>
    <property type="evidence" value="ECO:0007669"/>
    <property type="project" value="UniProtKB-UniRule"/>
</dbReference>
<dbReference type="GO" id="GO:0015937">
    <property type="term" value="P:coenzyme A biosynthetic process"/>
    <property type="evidence" value="ECO:0007669"/>
    <property type="project" value="UniProtKB-UniRule"/>
</dbReference>
<dbReference type="CDD" id="cd24015">
    <property type="entry name" value="ASKHA_NBD_PanK-III"/>
    <property type="match status" value="1"/>
</dbReference>
<dbReference type="Gene3D" id="3.30.420.40">
    <property type="match status" value="2"/>
</dbReference>
<dbReference type="HAMAP" id="MF_01274">
    <property type="entry name" value="Pantothen_kinase_3"/>
    <property type="match status" value="1"/>
</dbReference>
<dbReference type="InterPro" id="IPR043129">
    <property type="entry name" value="ATPase_NBD"/>
</dbReference>
<dbReference type="InterPro" id="IPR004619">
    <property type="entry name" value="Type_III_PanK"/>
</dbReference>
<dbReference type="NCBIfam" id="TIGR00671">
    <property type="entry name" value="baf"/>
    <property type="match status" value="1"/>
</dbReference>
<dbReference type="PANTHER" id="PTHR34265">
    <property type="entry name" value="TYPE III PANTOTHENATE KINASE"/>
    <property type="match status" value="1"/>
</dbReference>
<dbReference type="PANTHER" id="PTHR34265:SF1">
    <property type="entry name" value="TYPE III PANTOTHENATE KINASE"/>
    <property type="match status" value="1"/>
</dbReference>
<dbReference type="Pfam" id="PF03309">
    <property type="entry name" value="Pan_kinase"/>
    <property type="match status" value="1"/>
</dbReference>
<dbReference type="SUPFAM" id="SSF53067">
    <property type="entry name" value="Actin-like ATPase domain"/>
    <property type="match status" value="2"/>
</dbReference>
<feature type="chain" id="PRO_0000270872" description="Type III pantothenate kinase">
    <location>
        <begin position="1"/>
        <end position="279"/>
    </location>
</feature>
<feature type="active site" description="Proton acceptor" evidence="1">
    <location>
        <position position="101"/>
    </location>
</feature>
<feature type="binding site" evidence="1">
    <location>
        <begin position="6"/>
        <end position="13"/>
    </location>
    <ligand>
        <name>ATP</name>
        <dbReference type="ChEBI" id="CHEBI:30616"/>
    </ligand>
</feature>
<feature type="binding site" evidence="1">
    <location>
        <position position="92"/>
    </location>
    <ligand>
        <name>substrate</name>
    </ligand>
</feature>
<feature type="binding site" evidence="1">
    <location>
        <begin position="99"/>
        <end position="102"/>
    </location>
    <ligand>
        <name>substrate</name>
    </ligand>
</feature>
<feature type="binding site" evidence="1">
    <location>
        <position position="120"/>
    </location>
    <ligand>
        <name>K(+)</name>
        <dbReference type="ChEBI" id="CHEBI:29103"/>
    </ligand>
</feature>
<feature type="binding site" evidence="1">
    <location>
        <position position="123"/>
    </location>
    <ligand>
        <name>ATP</name>
        <dbReference type="ChEBI" id="CHEBI:30616"/>
    </ligand>
</feature>
<feature type="binding site" evidence="1">
    <location>
        <position position="177"/>
    </location>
    <ligand>
        <name>substrate</name>
    </ligand>
</feature>
<keyword id="KW-0067">ATP-binding</keyword>
<keyword id="KW-0173">Coenzyme A biosynthesis</keyword>
<keyword id="KW-0963">Cytoplasm</keyword>
<keyword id="KW-0418">Kinase</keyword>
<keyword id="KW-0479">Metal-binding</keyword>
<keyword id="KW-0547">Nucleotide-binding</keyword>
<keyword id="KW-0630">Potassium</keyword>
<keyword id="KW-1185">Reference proteome</keyword>
<keyword id="KW-0808">Transferase</keyword>
<reference key="1">
    <citation type="journal article" date="2011" name="Stand. Genomic Sci.">
        <title>Complete genome sequence of the halophilic and highly halotolerant Chromohalobacter salexigens type strain (1H11(T)).</title>
        <authorList>
            <person name="Copeland A."/>
            <person name="O'Connor K."/>
            <person name="Lucas S."/>
            <person name="Lapidus A."/>
            <person name="Berry K.W."/>
            <person name="Detter J.C."/>
            <person name="Del Rio T.G."/>
            <person name="Hammon N."/>
            <person name="Dalin E."/>
            <person name="Tice H."/>
            <person name="Pitluck S."/>
            <person name="Bruce D."/>
            <person name="Goodwin L."/>
            <person name="Han C."/>
            <person name="Tapia R."/>
            <person name="Saunders E."/>
            <person name="Schmutz J."/>
            <person name="Brettin T."/>
            <person name="Larimer F."/>
            <person name="Land M."/>
            <person name="Hauser L."/>
            <person name="Vargas C."/>
            <person name="Nieto J.J."/>
            <person name="Kyrpides N.C."/>
            <person name="Ivanova N."/>
            <person name="Goker M."/>
            <person name="Klenk H.P."/>
            <person name="Csonka L.N."/>
            <person name="Woyke T."/>
        </authorList>
    </citation>
    <scope>NUCLEOTIDE SEQUENCE [LARGE SCALE GENOMIC DNA]</scope>
    <source>
        <strain>ATCC BAA-138 / DSM 3043 / CIP 106854 / NCIMB 13768 / 1H11</strain>
    </source>
</reference>
<accession>Q1R0I9</accession>
<gene>
    <name evidence="1" type="primary">coaX</name>
    <name type="ordered locus">Csal_0407</name>
</gene>
<name>COAX_CHRSD</name>
<evidence type="ECO:0000255" key="1">
    <source>
        <dbReference type="HAMAP-Rule" id="MF_01274"/>
    </source>
</evidence>
<comment type="function">
    <text evidence="1">Catalyzes the phosphorylation of pantothenate (Pan), the first step in CoA biosynthesis.</text>
</comment>
<comment type="catalytic activity">
    <reaction evidence="1">
        <text>(R)-pantothenate + ATP = (R)-4'-phosphopantothenate + ADP + H(+)</text>
        <dbReference type="Rhea" id="RHEA:16373"/>
        <dbReference type="ChEBI" id="CHEBI:10986"/>
        <dbReference type="ChEBI" id="CHEBI:15378"/>
        <dbReference type="ChEBI" id="CHEBI:29032"/>
        <dbReference type="ChEBI" id="CHEBI:30616"/>
        <dbReference type="ChEBI" id="CHEBI:456216"/>
        <dbReference type="EC" id="2.7.1.33"/>
    </reaction>
</comment>
<comment type="cofactor">
    <cofactor evidence="1">
        <name>NH4(+)</name>
        <dbReference type="ChEBI" id="CHEBI:28938"/>
    </cofactor>
    <cofactor evidence="1">
        <name>K(+)</name>
        <dbReference type="ChEBI" id="CHEBI:29103"/>
    </cofactor>
    <text evidence="1">A monovalent cation. Ammonium or potassium.</text>
</comment>
<comment type="pathway">
    <text evidence="1">Cofactor biosynthesis; coenzyme A biosynthesis; CoA from (R)-pantothenate: step 1/5.</text>
</comment>
<comment type="subunit">
    <text evidence="1">Homodimer.</text>
</comment>
<comment type="subcellular location">
    <subcellularLocation>
        <location evidence="1">Cytoplasm</location>
    </subcellularLocation>
</comment>
<comment type="similarity">
    <text evidence="1">Belongs to the type III pantothenate kinase family.</text>
</comment>
<protein>
    <recommendedName>
        <fullName evidence="1">Type III pantothenate kinase</fullName>
        <ecNumber evidence="1">2.7.1.33</ecNumber>
    </recommendedName>
    <alternativeName>
        <fullName evidence="1">PanK-III</fullName>
    </alternativeName>
    <alternativeName>
        <fullName evidence="1">Pantothenic acid kinase</fullName>
    </alternativeName>
</protein>